<sequence length="519" mass="56926">MEEAKKDDSLSNVAEYSVSEISHALKRTIEDTFGHVRVRGEISGFRGAHSSGHCYFSLKDERARMEAVIWKTTFARLRFPPQEGLEVIATGRLTTFPGSSKYQIVIESLEPAGAGALMALLEERKRKLAAEGLFAESRKRPLPFMPHVIGVVTSPTGAVIRDIIHRITDRFPVHVVVWPVRVQGETTGAEVAAAISGFNALQPGGTIPRPDILIVARGGGSLEDLWGFNDEAVVRAAAASAIPLISAVGHETDWTLIDLAADRRAPTPTGAAEVAVPVKAELEANIARLSARLKGAISRCLDRRRQETRSLARALPSPDQLFALPRRRFDEAAGRLGRALQTSTQGKRLHLNAVRVSIATLDRRIAQARRDANQCGERLPLVYQGLVRHRRARFDRDAARVSPRVTLQRITTLGERLKIAIARKDRAVSLRVERARTVYEQAVRLAESLSYKSVLERGFALVRDGEDRPLKRASDVKPGETLRLQFADGNIGAISTGKSSNTNRKSAPAREPGKQGSLF</sequence>
<feature type="chain" id="PRO_1000079988" description="Exodeoxyribonuclease 7 large subunit">
    <location>
        <begin position="1"/>
        <end position="519"/>
    </location>
</feature>
<feature type="region of interest" description="Disordered" evidence="2">
    <location>
        <begin position="493"/>
        <end position="519"/>
    </location>
</feature>
<feature type="compositionally biased region" description="Polar residues" evidence="2">
    <location>
        <begin position="496"/>
        <end position="505"/>
    </location>
</feature>
<accession>Q11LY8</accession>
<keyword id="KW-0963">Cytoplasm</keyword>
<keyword id="KW-0269">Exonuclease</keyword>
<keyword id="KW-0378">Hydrolase</keyword>
<keyword id="KW-0540">Nuclease</keyword>
<proteinExistence type="inferred from homology"/>
<protein>
    <recommendedName>
        <fullName evidence="1">Exodeoxyribonuclease 7 large subunit</fullName>
        <ecNumber evidence="1">3.1.11.6</ecNumber>
    </recommendedName>
    <alternativeName>
        <fullName evidence="1">Exodeoxyribonuclease VII large subunit</fullName>
        <shortName evidence="1">Exonuclease VII large subunit</shortName>
    </alternativeName>
</protein>
<organism>
    <name type="scientific">Chelativorans sp. (strain BNC1)</name>
    <dbReference type="NCBI Taxonomy" id="266779"/>
    <lineage>
        <taxon>Bacteria</taxon>
        <taxon>Pseudomonadati</taxon>
        <taxon>Pseudomonadota</taxon>
        <taxon>Alphaproteobacteria</taxon>
        <taxon>Hyphomicrobiales</taxon>
        <taxon>Phyllobacteriaceae</taxon>
        <taxon>Chelativorans</taxon>
    </lineage>
</organism>
<gene>
    <name evidence="1" type="primary">xseA</name>
    <name type="ordered locus">Meso_0182</name>
</gene>
<dbReference type="EC" id="3.1.11.6" evidence="1"/>
<dbReference type="EMBL" id="CP000390">
    <property type="protein sequence ID" value="ABG61587.1"/>
    <property type="molecule type" value="Genomic_DNA"/>
</dbReference>
<dbReference type="SMR" id="Q11LY8"/>
<dbReference type="STRING" id="266779.Meso_0182"/>
<dbReference type="KEGG" id="mes:Meso_0182"/>
<dbReference type="eggNOG" id="COG1570">
    <property type="taxonomic scope" value="Bacteria"/>
</dbReference>
<dbReference type="HOGENOM" id="CLU_023625_3_1_5"/>
<dbReference type="OrthoDB" id="9802795at2"/>
<dbReference type="GO" id="GO:0005737">
    <property type="term" value="C:cytoplasm"/>
    <property type="evidence" value="ECO:0007669"/>
    <property type="project" value="UniProtKB-SubCell"/>
</dbReference>
<dbReference type="GO" id="GO:0009318">
    <property type="term" value="C:exodeoxyribonuclease VII complex"/>
    <property type="evidence" value="ECO:0007669"/>
    <property type="project" value="InterPro"/>
</dbReference>
<dbReference type="GO" id="GO:0008855">
    <property type="term" value="F:exodeoxyribonuclease VII activity"/>
    <property type="evidence" value="ECO:0007669"/>
    <property type="project" value="UniProtKB-UniRule"/>
</dbReference>
<dbReference type="GO" id="GO:0003676">
    <property type="term" value="F:nucleic acid binding"/>
    <property type="evidence" value="ECO:0007669"/>
    <property type="project" value="InterPro"/>
</dbReference>
<dbReference type="GO" id="GO:0006308">
    <property type="term" value="P:DNA catabolic process"/>
    <property type="evidence" value="ECO:0007669"/>
    <property type="project" value="UniProtKB-UniRule"/>
</dbReference>
<dbReference type="CDD" id="cd04489">
    <property type="entry name" value="ExoVII_LU_OBF"/>
    <property type="match status" value="1"/>
</dbReference>
<dbReference type="HAMAP" id="MF_00378">
    <property type="entry name" value="Exonuc_7_L"/>
    <property type="match status" value="1"/>
</dbReference>
<dbReference type="InterPro" id="IPR003753">
    <property type="entry name" value="Exonuc_VII_L"/>
</dbReference>
<dbReference type="InterPro" id="IPR020579">
    <property type="entry name" value="Exonuc_VII_lsu_C"/>
</dbReference>
<dbReference type="InterPro" id="IPR025824">
    <property type="entry name" value="OB-fold_nuc-bd_dom"/>
</dbReference>
<dbReference type="NCBIfam" id="TIGR00237">
    <property type="entry name" value="xseA"/>
    <property type="match status" value="1"/>
</dbReference>
<dbReference type="PANTHER" id="PTHR30008">
    <property type="entry name" value="EXODEOXYRIBONUCLEASE 7 LARGE SUBUNIT"/>
    <property type="match status" value="1"/>
</dbReference>
<dbReference type="PANTHER" id="PTHR30008:SF0">
    <property type="entry name" value="EXODEOXYRIBONUCLEASE 7 LARGE SUBUNIT"/>
    <property type="match status" value="1"/>
</dbReference>
<dbReference type="Pfam" id="PF02601">
    <property type="entry name" value="Exonuc_VII_L"/>
    <property type="match status" value="1"/>
</dbReference>
<dbReference type="Pfam" id="PF13742">
    <property type="entry name" value="tRNA_anti_2"/>
    <property type="match status" value="1"/>
</dbReference>
<evidence type="ECO:0000255" key="1">
    <source>
        <dbReference type="HAMAP-Rule" id="MF_00378"/>
    </source>
</evidence>
<evidence type="ECO:0000256" key="2">
    <source>
        <dbReference type="SAM" id="MobiDB-lite"/>
    </source>
</evidence>
<comment type="function">
    <text evidence="1">Bidirectionally degrades single-stranded DNA into large acid-insoluble oligonucleotides, which are then degraded further into small acid-soluble oligonucleotides.</text>
</comment>
<comment type="catalytic activity">
    <reaction evidence="1">
        <text>Exonucleolytic cleavage in either 5'- to 3'- or 3'- to 5'-direction to yield nucleoside 5'-phosphates.</text>
        <dbReference type="EC" id="3.1.11.6"/>
    </reaction>
</comment>
<comment type="subunit">
    <text evidence="1">Heterooligomer composed of large and small subunits.</text>
</comment>
<comment type="subcellular location">
    <subcellularLocation>
        <location evidence="1">Cytoplasm</location>
    </subcellularLocation>
</comment>
<comment type="similarity">
    <text evidence="1">Belongs to the XseA family.</text>
</comment>
<reference key="1">
    <citation type="submission" date="2006-06" db="EMBL/GenBank/DDBJ databases">
        <title>Complete sequence of chromosome of Mesorhizobium sp. BNC1.</title>
        <authorList>
            <consortium name="US DOE Joint Genome Institute"/>
            <person name="Copeland A."/>
            <person name="Lucas S."/>
            <person name="Lapidus A."/>
            <person name="Barry K."/>
            <person name="Detter J.C."/>
            <person name="Glavina del Rio T."/>
            <person name="Hammon N."/>
            <person name="Israni S."/>
            <person name="Dalin E."/>
            <person name="Tice H."/>
            <person name="Pitluck S."/>
            <person name="Chertkov O."/>
            <person name="Brettin T."/>
            <person name="Bruce D."/>
            <person name="Han C."/>
            <person name="Tapia R."/>
            <person name="Gilna P."/>
            <person name="Schmutz J."/>
            <person name="Larimer F."/>
            <person name="Land M."/>
            <person name="Hauser L."/>
            <person name="Kyrpides N."/>
            <person name="Mikhailova N."/>
            <person name="Richardson P."/>
        </authorList>
    </citation>
    <scope>NUCLEOTIDE SEQUENCE [LARGE SCALE GENOMIC DNA]</scope>
    <source>
        <strain>BNC1</strain>
    </source>
</reference>
<name>EX7L_CHESB</name>